<comment type="function">
    <text evidence="1">Converts the preformed base xanthine, a product of nucleic acid breakdown, to xanthosine 5'-monophosphate (XMP), so it can be reused for RNA or DNA synthesis.</text>
</comment>
<comment type="catalytic activity">
    <reaction evidence="1">
        <text>XMP + diphosphate = xanthine + 5-phospho-alpha-D-ribose 1-diphosphate</text>
        <dbReference type="Rhea" id="RHEA:10800"/>
        <dbReference type="ChEBI" id="CHEBI:17712"/>
        <dbReference type="ChEBI" id="CHEBI:33019"/>
        <dbReference type="ChEBI" id="CHEBI:57464"/>
        <dbReference type="ChEBI" id="CHEBI:58017"/>
        <dbReference type="EC" id="2.4.2.22"/>
    </reaction>
</comment>
<comment type="pathway">
    <text evidence="1">Purine metabolism; XMP biosynthesis via salvage pathway; XMP from xanthine: step 1/1.</text>
</comment>
<comment type="subunit">
    <text evidence="1">Homodimer.</text>
</comment>
<comment type="subcellular location">
    <subcellularLocation>
        <location evidence="1">Cytoplasm</location>
    </subcellularLocation>
</comment>
<comment type="similarity">
    <text evidence="1">Belongs to the purine/pyrimidine phosphoribosyltransferase family. Xpt subfamily.</text>
</comment>
<sequence length="192" mass="21457">MKLLEERIRKDGEVLDGDVLKINSFLNHQVDPELMMQVGEEFKRLFENEKITKVLTCEASGIAPGIMAAYQLGVPMVFARKKKPSTLNDAVYWADVFSYTKKVNNKICVEKKFLSSDDHLLIIDDFLAHGEAVKGMLNIAKQANAAVAGVGVVVAKEFQGGSDWVKEHGYRLEALARISNFENNQVHFVGEK</sequence>
<evidence type="ECO:0000255" key="1">
    <source>
        <dbReference type="HAMAP-Rule" id="MF_01184"/>
    </source>
</evidence>
<dbReference type="EC" id="2.4.2.22" evidence="1"/>
<dbReference type="EMBL" id="CP000413">
    <property type="protein sequence ID" value="ABJ59638.1"/>
    <property type="molecule type" value="Genomic_DNA"/>
</dbReference>
<dbReference type="RefSeq" id="WP_003647879.1">
    <property type="nucleotide sequence ID" value="NZ_WBMG01000001.1"/>
</dbReference>
<dbReference type="SMR" id="Q046I4"/>
<dbReference type="GeneID" id="29640060"/>
<dbReference type="KEGG" id="lga:LGAS_0229"/>
<dbReference type="HOGENOM" id="CLU_099015_0_0_9"/>
<dbReference type="BioCyc" id="LGAS324831:G1G6Y-226-MONOMER"/>
<dbReference type="UniPathway" id="UPA00602">
    <property type="reaction ID" value="UER00658"/>
</dbReference>
<dbReference type="Proteomes" id="UP000000664">
    <property type="component" value="Chromosome"/>
</dbReference>
<dbReference type="GO" id="GO:0005737">
    <property type="term" value="C:cytoplasm"/>
    <property type="evidence" value="ECO:0007669"/>
    <property type="project" value="UniProtKB-SubCell"/>
</dbReference>
<dbReference type="GO" id="GO:0000310">
    <property type="term" value="F:xanthine phosphoribosyltransferase activity"/>
    <property type="evidence" value="ECO:0007669"/>
    <property type="project" value="UniProtKB-UniRule"/>
</dbReference>
<dbReference type="GO" id="GO:0006166">
    <property type="term" value="P:purine ribonucleoside salvage"/>
    <property type="evidence" value="ECO:0007669"/>
    <property type="project" value="UniProtKB-KW"/>
</dbReference>
<dbReference type="GO" id="GO:0046110">
    <property type="term" value="P:xanthine metabolic process"/>
    <property type="evidence" value="ECO:0007669"/>
    <property type="project" value="InterPro"/>
</dbReference>
<dbReference type="GO" id="GO:0032265">
    <property type="term" value="P:XMP salvage"/>
    <property type="evidence" value="ECO:0007669"/>
    <property type="project" value="UniProtKB-UniRule"/>
</dbReference>
<dbReference type="CDD" id="cd06223">
    <property type="entry name" value="PRTases_typeI"/>
    <property type="match status" value="1"/>
</dbReference>
<dbReference type="Gene3D" id="3.40.50.2020">
    <property type="match status" value="1"/>
</dbReference>
<dbReference type="HAMAP" id="MF_01184">
    <property type="entry name" value="XPRTase"/>
    <property type="match status" value="1"/>
</dbReference>
<dbReference type="InterPro" id="IPR000836">
    <property type="entry name" value="PRibTrfase_dom"/>
</dbReference>
<dbReference type="InterPro" id="IPR029057">
    <property type="entry name" value="PRTase-like"/>
</dbReference>
<dbReference type="InterPro" id="IPR050118">
    <property type="entry name" value="Pur/Pyrimidine_PRTase"/>
</dbReference>
<dbReference type="InterPro" id="IPR010079">
    <property type="entry name" value="Xanthine_PRibTrfase"/>
</dbReference>
<dbReference type="NCBIfam" id="NF006671">
    <property type="entry name" value="PRK09219.1"/>
    <property type="match status" value="1"/>
</dbReference>
<dbReference type="NCBIfam" id="TIGR01744">
    <property type="entry name" value="XPRTase"/>
    <property type="match status" value="1"/>
</dbReference>
<dbReference type="PANTHER" id="PTHR43864">
    <property type="entry name" value="HYPOXANTHINE/GUANINE PHOSPHORIBOSYLTRANSFERASE"/>
    <property type="match status" value="1"/>
</dbReference>
<dbReference type="PANTHER" id="PTHR43864:SF1">
    <property type="entry name" value="XANTHINE PHOSPHORIBOSYLTRANSFERASE"/>
    <property type="match status" value="1"/>
</dbReference>
<dbReference type="Pfam" id="PF00156">
    <property type="entry name" value="Pribosyltran"/>
    <property type="match status" value="1"/>
</dbReference>
<dbReference type="SUPFAM" id="SSF53271">
    <property type="entry name" value="PRTase-like"/>
    <property type="match status" value="1"/>
</dbReference>
<reference key="1">
    <citation type="journal article" date="2006" name="Proc. Natl. Acad. Sci. U.S.A.">
        <title>Comparative genomics of the lactic acid bacteria.</title>
        <authorList>
            <person name="Makarova K.S."/>
            <person name="Slesarev A."/>
            <person name="Wolf Y.I."/>
            <person name="Sorokin A."/>
            <person name="Mirkin B."/>
            <person name="Koonin E.V."/>
            <person name="Pavlov A."/>
            <person name="Pavlova N."/>
            <person name="Karamychev V."/>
            <person name="Polouchine N."/>
            <person name="Shakhova V."/>
            <person name="Grigoriev I."/>
            <person name="Lou Y."/>
            <person name="Rohksar D."/>
            <person name="Lucas S."/>
            <person name="Huang K."/>
            <person name="Goodstein D.M."/>
            <person name="Hawkins T."/>
            <person name="Plengvidhya V."/>
            <person name="Welker D."/>
            <person name="Hughes J."/>
            <person name="Goh Y."/>
            <person name="Benson A."/>
            <person name="Baldwin K."/>
            <person name="Lee J.-H."/>
            <person name="Diaz-Muniz I."/>
            <person name="Dosti B."/>
            <person name="Smeianov V."/>
            <person name="Wechter W."/>
            <person name="Barabote R."/>
            <person name="Lorca G."/>
            <person name="Altermann E."/>
            <person name="Barrangou R."/>
            <person name="Ganesan B."/>
            <person name="Xie Y."/>
            <person name="Rawsthorne H."/>
            <person name="Tamir D."/>
            <person name="Parker C."/>
            <person name="Breidt F."/>
            <person name="Broadbent J.R."/>
            <person name="Hutkins R."/>
            <person name="O'Sullivan D."/>
            <person name="Steele J."/>
            <person name="Unlu G."/>
            <person name="Saier M.H. Jr."/>
            <person name="Klaenhammer T."/>
            <person name="Richardson P."/>
            <person name="Kozyavkin S."/>
            <person name="Weimer B.C."/>
            <person name="Mills D.A."/>
        </authorList>
    </citation>
    <scope>NUCLEOTIDE SEQUENCE [LARGE SCALE GENOMIC DNA]</scope>
    <source>
        <strain>ATCC 33323 / DSM 20243 / BCRC 14619 / CIP 102991 / JCM 1131 / KCTC 3163 / NCIMB 11718 / NCTC 13722 / AM63</strain>
    </source>
</reference>
<protein>
    <recommendedName>
        <fullName evidence="1">Xanthine phosphoribosyltransferase</fullName>
        <shortName evidence="1">XPRTase</shortName>
        <ecNumber evidence="1">2.4.2.22</ecNumber>
    </recommendedName>
</protein>
<gene>
    <name evidence="1" type="primary">xpt</name>
    <name type="ordered locus">LGAS_0229</name>
</gene>
<proteinExistence type="inferred from homology"/>
<organism>
    <name type="scientific">Lactobacillus gasseri (strain ATCC 33323 / DSM 20243 / BCRC 14619 / CIP 102991 / JCM 1131 / KCTC 3163 / NCIMB 11718 / NCTC 13722 / AM63)</name>
    <dbReference type="NCBI Taxonomy" id="324831"/>
    <lineage>
        <taxon>Bacteria</taxon>
        <taxon>Bacillati</taxon>
        <taxon>Bacillota</taxon>
        <taxon>Bacilli</taxon>
        <taxon>Lactobacillales</taxon>
        <taxon>Lactobacillaceae</taxon>
        <taxon>Lactobacillus</taxon>
    </lineage>
</organism>
<keyword id="KW-0963">Cytoplasm</keyword>
<keyword id="KW-0328">Glycosyltransferase</keyword>
<keyword id="KW-0660">Purine salvage</keyword>
<keyword id="KW-0808">Transferase</keyword>
<name>XPT_LACGA</name>
<feature type="chain" id="PRO_0000339706" description="Xanthine phosphoribosyltransferase">
    <location>
        <begin position="1"/>
        <end position="192"/>
    </location>
</feature>
<feature type="binding site" evidence="1">
    <location>
        <position position="20"/>
    </location>
    <ligand>
        <name>xanthine</name>
        <dbReference type="ChEBI" id="CHEBI:17712"/>
    </ligand>
</feature>
<feature type="binding site" evidence="1">
    <location>
        <position position="27"/>
    </location>
    <ligand>
        <name>xanthine</name>
        <dbReference type="ChEBI" id="CHEBI:17712"/>
    </ligand>
</feature>
<feature type="binding site" evidence="1">
    <location>
        <begin position="128"/>
        <end position="132"/>
    </location>
    <ligand>
        <name>5-phospho-alpha-D-ribose 1-diphosphate</name>
        <dbReference type="ChEBI" id="CHEBI:58017"/>
    </ligand>
</feature>
<feature type="binding site" evidence="1">
    <location>
        <position position="156"/>
    </location>
    <ligand>
        <name>xanthine</name>
        <dbReference type="ChEBI" id="CHEBI:17712"/>
    </ligand>
</feature>
<accession>Q046I4</accession>